<accession>Q7N562</accession>
<organism>
    <name type="scientific">Photorhabdus laumondii subsp. laumondii (strain DSM 15139 / CIP 105565 / TT01)</name>
    <name type="common">Photorhabdus luminescens subsp. laumondii</name>
    <dbReference type="NCBI Taxonomy" id="243265"/>
    <lineage>
        <taxon>Bacteria</taxon>
        <taxon>Pseudomonadati</taxon>
        <taxon>Pseudomonadota</taxon>
        <taxon>Gammaproteobacteria</taxon>
        <taxon>Enterobacterales</taxon>
        <taxon>Morganellaceae</taxon>
        <taxon>Photorhabdus</taxon>
    </lineage>
</organism>
<keyword id="KW-0574">Periplasm</keyword>
<keyword id="KW-1185">Reference proteome</keyword>
<keyword id="KW-0732">Signal</keyword>
<proteinExistence type="inferred from homology"/>
<protein>
    <recommendedName>
        <fullName evidence="1">UPF0312 protein plu2095</fullName>
    </recommendedName>
</protein>
<evidence type="ECO:0000255" key="1">
    <source>
        <dbReference type="HAMAP-Rule" id="MF_00780"/>
    </source>
</evidence>
<sequence length="192" mass="21296">MLKKTLLGLTAGALLLNASSALAANYKIDIPGQHAFIGFRIQHLGYSWLYGTFKDFDGSFTFDEQNPAENKVNVTIKIASLDTNHAERDKHLRSKDYFNTEKYPEAKFTSTEVKKEGEKYVVTGDLTLNGVTKPVILNAELMGEGKDPWGGYRAGFEASGKIKLKDFNFKADLGPKSQEADLLISIEGVREK</sequence>
<feature type="signal peptide" evidence="1">
    <location>
        <begin position="1"/>
        <end position="23"/>
    </location>
</feature>
<feature type="chain" id="PRO_0000036279" description="UPF0312 protein plu2095">
    <location>
        <begin position="24"/>
        <end position="192"/>
    </location>
</feature>
<dbReference type="EMBL" id="BX571866">
    <property type="protein sequence ID" value="CAE14388.1"/>
    <property type="molecule type" value="Genomic_DNA"/>
</dbReference>
<dbReference type="RefSeq" id="WP_011146350.1">
    <property type="nucleotide sequence ID" value="NC_005126.1"/>
</dbReference>
<dbReference type="SMR" id="Q7N562"/>
<dbReference type="STRING" id="243265.plu2095"/>
<dbReference type="GeneID" id="48848374"/>
<dbReference type="KEGG" id="plu:plu2095"/>
<dbReference type="eggNOG" id="COG2353">
    <property type="taxonomic scope" value="Bacteria"/>
</dbReference>
<dbReference type="HOGENOM" id="CLU_071003_1_2_6"/>
<dbReference type="OrthoDB" id="9811006at2"/>
<dbReference type="Proteomes" id="UP000002514">
    <property type="component" value="Chromosome"/>
</dbReference>
<dbReference type="GO" id="GO:0042597">
    <property type="term" value="C:periplasmic space"/>
    <property type="evidence" value="ECO:0007669"/>
    <property type="project" value="UniProtKB-SubCell"/>
</dbReference>
<dbReference type="Gene3D" id="2.40.128.110">
    <property type="entry name" value="Lipid/polyisoprenoid-binding, YceI-like"/>
    <property type="match status" value="1"/>
</dbReference>
<dbReference type="HAMAP" id="MF_00780">
    <property type="entry name" value="UPF0312"/>
    <property type="match status" value="1"/>
</dbReference>
<dbReference type="InterPro" id="IPR007372">
    <property type="entry name" value="Lipid/polyisoprenoid-bd_YceI"/>
</dbReference>
<dbReference type="InterPro" id="IPR036761">
    <property type="entry name" value="TTHA0802/YceI-like_sf"/>
</dbReference>
<dbReference type="InterPro" id="IPR023480">
    <property type="entry name" value="UPF0312/YceI"/>
</dbReference>
<dbReference type="NCBIfam" id="NF002994">
    <property type="entry name" value="PRK03757.1"/>
    <property type="match status" value="1"/>
</dbReference>
<dbReference type="PANTHER" id="PTHR34406">
    <property type="entry name" value="PROTEIN YCEI"/>
    <property type="match status" value="1"/>
</dbReference>
<dbReference type="PANTHER" id="PTHR34406:SF1">
    <property type="entry name" value="PROTEIN YCEI"/>
    <property type="match status" value="1"/>
</dbReference>
<dbReference type="Pfam" id="PF04264">
    <property type="entry name" value="YceI"/>
    <property type="match status" value="1"/>
</dbReference>
<dbReference type="SMART" id="SM00867">
    <property type="entry name" value="YceI"/>
    <property type="match status" value="1"/>
</dbReference>
<dbReference type="SUPFAM" id="SSF101874">
    <property type="entry name" value="YceI-like"/>
    <property type="match status" value="1"/>
</dbReference>
<name>Y2095_PHOLL</name>
<reference key="1">
    <citation type="journal article" date="2003" name="Nat. Biotechnol.">
        <title>The genome sequence of the entomopathogenic bacterium Photorhabdus luminescens.</title>
        <authorList>
            <person name="Duchaud E."/>
            <person name="Rusniok C."/>
            <person name="Frangeul L."/>
            <person name="Buchrieser C."/>
            <person name="Givaudan A."/>
            <person name="Taourit S."/>
            <person name="Bocs S."/>
            <person name="Boursaux-Eude C."/>
            <person name="Chandler M."/>
            <person name="Charles J.-F."/>
            <person name="Dassa E."/>
            <person name="Derose R."/>
            <person name="Derzelle S."/>
            <person name="Freyssinet G."/>
            <person name="Gaudriault S."/>
            <person name="Medigue C."/>
            <person name="Lanois A."/>
            <person name="Powell K."/>
            <person name="Siguier P."/>
            <person name="Vincent R."/>
            <person name="Wingate V."/>
            <person name="Zouine M."/>
            <person name="Glaser P."/>
            <person name="Boemare N."/>
            <person name="Danchin A."/>
            <person name="Kunst F."/>
        </authorList>
    </citation>
    <scope>NUCLEOTIDE SEQUENCE [LARGE SCALE GENOMIC DNA]</scope>
    <source>
        <strain>DSM 15139 / CIP 105565 / TT01</strain>
    </source>
</reference>
<gene>
    <name type="ordered locus">plu2095</name>
</gene>
<comment type="subcellular location">
    <subcellularLocation>
        <location evidence="1">Periplasm</location>
    </subcellularLocation>
</comment>
<comment type="similarity">
    <text evidence="1">Belongs to the UPF0312 family. Type 1 subfamily.</text>
</comment>